<gene>
    <name type="primary">traT</name>
</gene>
<protein>
    <recommendedName>
        <fullName>TraT complement resistance protein</fullName>
    </recommendedName>
</protein>
<proteinExistence type="inferred from homology"/>
<reference key="1">
    <citation type="submission" date="1989-03" db="EMBL/GenBank/DDBJ databases">
        <authorList>
            <person name="O'Connor D."/>
        </authorList>
    </citation>
    <scope>NUCLEOTIDE SEQUENCE [GENOMIC DNA]</scope>
</reference>
<evidence type="ECO:0000255" key="1">
    <source>
        <dbReference type="PROSITE-ProRule" id="PRU00303"/>
    </source>
</evidence>
<evidence type="ECO:0000305" key="2"/>
<feature type="signal peptide" evidence="1">
    <location>
        <begin position="1"/>
        <end position="20"/>
    </location>
</feature>
<feature type="chain" id="PRO_0000018207" description="TraT complement resistance protein">
    <location>
        <begin position="21"/>
        <end position="243"/>
    </location>
</feature>
<feature type="lipid moiety-binding region" description="N-palmitoyl cysteine" evidence="1">
    <location>
        <position position="21"/>
    </location>
</feature>
<feature type="lipid moiety-binding region" description="S-diacylglycerol cysteine" evidence="1">
    <location>
        <position position="21"/>
    </location>
</feature>
<comment type="function">
    <text>Responsible for preventing unproductive conjugation between bacteria carrying like plasmids.</text>
</comment>
<comment type="subcellular location">
    <subcellularLocation>
        <location>Cell outer membrane</location>
        <topology>Lipid-anchor</topology>
    </subcellularLocation>
</comment>
<comment type="similarity">
    <text evidence="2">Belongs to the TraT lipoprotein family.</text>
</comment>
<name>TRAT4_ECOLX</name>
<geneLocation type="plasmid">
    <name>ColB4-K98</name>
</geneLocation>
<dbReference type="EMBL" id="X14566">
    <property type="protein sequence ID" value="CAA32704.1"/>
    <property type="molecule type" value="Genomic_DNA"/>
</dbReference>
<dbReference type="PIR" id="S07997">
    <property type="entry name" value="S07997"/>
</dbReference>
<dbReference type="RefSeq" id="WP_000850424.1">
    <property type="nucleotide sequence ID" value="NZ_WXYX01000004.1"/>
</dbReference>
<dbReference type="RefSeq" id="YP_001816547.1">
    <property type="nucleotide sequence ID" value="NC_010558.1"/>
</dbReference>
<dbReference type="RefSeq" id="YP_009068646.1">
    <property type="nucleotide sequence ID" value="NC_025141.1"/>
</dbReference>
<dbReference type="SMR" id="P15177"/>
<dbReference type="GeneID" id="75203853"/>
<dbReference type="OMA" id="MFEKTAY"/>
<dbReference type="OrthoDB" id="9791439at2"/>
<dbReference type="GO" id="GO:0009279">
    <property type="term" value="C:cell outer membrane"/>
    <property type="evidence" value="ECO:0007669"/>
    <property type="project" value="UniProtKB-SubCell"/>
</dbReference>
<dbReference type="InterPro" id="IPR008874">
    <property type="entry name" value="TraT_complement-R"/>
</dbReference>
<dbReference type="NCBIfam" id="NF010291">
    <property type="entry name" value="PRK13731.1"/>
    <property type="match status" value="1"/>
</dbReference>
<dbReference type="Pfam" id="PF05818">
    <property type="entry name" value="TraT"/>
    <property type="match status" value="1"/>
</dbReference>
<dbReference type="PIRSF" id="PIRSF002859">
    <property type="entry name" value="Lipo_traT"/>
    <property type="match status" value="1"/>
</dbReference>
<dbReference type="PROSITE" id="PS51257">
    <property type="entry name" value="PROKAR_LIPOPROTEIN"/>
    <property type="match status" value="1"/>
</dbReference>
<keyword id="KW-0998">Cell outer membrane</keyword>
<keyword id="KW-0184">Conjugation</keyword>
<keyword id="KW-0449">Lipoprotein</keyword>
<keyword id="KW-0472">Membrane</keyword>
<keyword id="KW-0564">Palmitate</keyword>
<keyword id="KW-0614">Plasmid</keyword>
<keyword id="KW-0732">Signal</keyword>
<organism>
    <name type="scientific">Escherichia coli</name>
    <dbReference type="NCBI Taxonomy" id="562"/>
    <lineage>
        <taxon>Bacteria</taxon>
        <taxon>Pseudomonadati</taxon>
        <taxon>Pseudomonadota</taxon>
        <taxon>Gammaproteobacteria</taxon>
        <taxon>Enterobacterales</taxon>
        <taxon>Enterobacteriaceae</taxon>
        <taxon>Escherichia</taxon>
    </lineage>
</organism>
<accession>P15177</accession>
<sequence length="243" mass="25874">MKTKKLMMVALVSSTLALSGCGAMSTAIKKRNLEVKTQMSETIWLEPASERTVFLQIKNTSDKDMSGLQGKIADAVKAKGYQVVTSPDKAYYWIQANVLKADKMDLRESQGWLNRGYEGAAVGAALGAGITGYNSSSAGATLGVGLAAGLVGMAADAMVEDVNYTMITDVQIAERTKATVTTDNVAALRQGTSGAKIQTSTETGNQHKYQTRVVSNANKVNLKFEEAKPVLEDQLAKSIANIL</sequence>